<evidence type="ECO:0000250" key="1"/>
<evidence type="ECO:0000255" key="2"/>
<evidence type="ECO:0000256" key="3">
    <source>
        <dbReference type="SAM" id="MobiDB-lite"/>
    </source>
</evidence>
<evidence type="ECO:0000305" key="4"/>
<name>PALI_NEUCR</name>
<accession>Q7SFN5</accession>
<feature type="chain" id="PRO_0000058214" description="pH-response regulator protein palI/prr-5">
    <location>
        <begin position="1"/>
        <end position="700"/>
    </location>
</feature>
<feature type="topological domain" description="Cytoplasmic" evidence="2">
    <location>
        <begin position="1"/>
        <end position="8"/>
    </location>
</feature>
<feature type="transmembrane region" description="Helical" evidence="2">
    <location>
        <begin position="9"/>
        <end position="29"/>
    </location>
</feature>
<feature type="topological domain" description="Extracellular" evidence="2">
    <location>
        <begin position="30"/>
        <end position="90"/>
    </location>
</feature>
<feature type="transmembrane region" description="Helical" evidence="2">
    <location>
        <begin position="91"/>
        <end position="111"/>
    </location>
</feature>
<feature type="topological domain" description="Cytoplasmic" evidence="2">
    <location>
        <begin position="112"/>
        <end position="123"/>
    </location>
</feature>
<feature type="transmembrane region" description="Helical" evidence="2">
    <location>
        <begin position="124"/>
        <end position="144"/>
    </location>
</feature>
<feature type="topological domain" description="Extracellular" evidence="2">
    <location>
        <begin position="145"/>
        <end position="152"/>
    </location>
</feature>
<feature type="transmembrane region" description="Helical" evidence="2">
    <location>
        <begin position="153"/>
        <end position="173"/>
    </location>
</feature>
<feature type="topological domain" description="Cytoplasmic" evidence="2">
    <location>
        <begin position="174"/>
        <end position="700"/>
    </location>
</feature>
<feature type="region of interest" description="Disordered" evidence="3">
    <location>
        <begin position="226"/>
        <end position="491"/>
    </location>
</feature>
<feature type="region of interest" description="Disordered" evidence="3">
    <location>
        <begin position="507"/>
        <end position="560"/>
    </location>
</feature>
<feature type="region of interest" description="Disordered" evidence="3">
    <location>
        <begin position="573"/>
        <end position="700"/>
    </location>
</feature>
<feature type="compositionally biased region" description="Basic and acidic residues" evidence="3">
    <location>
        <begin position="234"/>
        <end position="252"/>
    </location>
</feature>
<feature type="compositionally biased region" description="Gly residues" evidence="3">
    <location>
        <begin position="320"/>
        <end position="378"/>
    </location>
</feature>
<feature type="compositionally biased region" description="Polar residues" evidence="3">
    <location>
        <begin position="414"/>
        <end position="424"/>
    </location>
</feature>
<feature type="compositionally biased region" description="Polar residues" evidence="3">
    <location>
        <begin position="593"/>
        <end position="603"/>
    </location>
</feature>
<feature type="compositionally biased region" description="Polar residues" evidence="3">
    <location>
        <begin position="615"/>
        <end position="637"/>
    </location>
</feature>
<feature type="compositionally biased region" description="Low complexity" evidence="3">
    <location>
        <begin position="657"/>
        <end position="671"/>
    </location>
</feature>
<reference key="1">
    <citation type="journal article" date="2003" name="Nucleic Acids Res.">
        <title>What's in the genome of a filamentous fungus? Analysis of the Neurospora genome sequence.</title>
        <authorList>
            <person name="Mannhaupt G."/>
            <person name="Montrone C."/>
            <person name="Haase D."/>
            <person name="Mewes H.-W."/>
            <person name="Aign V."/>
            <person name="Hoheisel J.D."/>
            <person name="Fartmann B."/>
            <person name="Nyakatura G."/>
            <person name="Kempken F."/>
            <person name="Maier J."/>
            <person name="Schulte U."/>
        </authorList>
    </citation>
    <scope>NUCLEOTIDE SEQUENCE [LARGE SCALE GENOMIC DNA]</scope>
    <source>
        <strain>ATCC 24698 / 74-OR23-1A / CBS 708.71 / DSM 1257 / FGSC 987</strain>
    </source>
</reference>
<reference key="2">
    <citation type="journal article" date="2003" name="Nature">
        <title>The genome sequence of the filamentous fungus Neurospora crassa.</title>
        <authorList>
            <person name="Galagan J.E."/>
            <person name="Calvo S.E."/>
            <person name="Borkovich K.A."/>
            <person name="Selker E.U."/>
            <person name="Read N.D."/>
            <person name="Jaffe D.B."/>
            <person name="FitzHugh W."/>
            <person name="Ma L.-J."/>
            <person name="Smirnov S."/>
            <person name="Purcell S."/>
            <person name="Rehman B."/>
            <person name="Elkins T."/>
            <person name="Engels R."/>
            <person name="Wang S."/>
            <person name="Nielsen C.B."/>
            <person name="Butler J."/>
            <person name="Endrizzi M."/>
            <person name="Qui D."/>
            <person name="Ianakiev P."/>
            <person name="Bell-Pedersen D."/>
            <person name="Nelson M.A."/>
            <person name="Werner-Washburne M."/>
            <person name="Selitrennikoff C.P."/>
            <person name="Kinsey J.A."/>
            <person name="Braun E.L."/>
            <person name="Zelter A."/>
            <person name="Schulte U."/>
            <person name="Kothe G.O."/>
            <person name="Jedd G."/>
            <person name="Mewes H.-W."/>
            <person name="Staben C."/>
            <person name="Marcotte E."/>
            <person name="Greenberg D."/>
            <person name="Roy A."/>
            <person name="Foley K."/>
            <person name="Naylor J."/>
            <person name="Stange-Thomann N."/>
            <person name="Barrett R."/>
            <person name="Gnerre S."/>
            <person name="Kamal M."/>
            <person name="Kamvysselis M."/>
            <person name="Mauceli E.W."/>
            <person name="Bielke C."/>
            <person name="Rudd S."/>
            <person name="Frishman D."/>
            <person name="Krystofova S."/>
            <person name="Rasmussen C."/>
            <person name="Metzenberg R.L."/>
            <person name="Perkins D.D."/>
            <person name="Kroken S."/>
            <person name="Cogoni C."/>
            <person name="Macino G."/>
            <person name="Catcheside D.E.A."/>
            <person name="Li W."/>
            <person name="Pratt R.J."/>
            <person name="Osmani S.A."/>
            <person name="DeSouza C.P.C."/>
            <person name="Glass N.L."/>
            <person name="Orbach M.J."/>
            <person name="Berglund J.A."/>
            <person name="Voelker R."/>
            <person name="Yarden O."/>
            <person name="Plamann M."/>
            <person name="Seiler S."/>
            <person name="Dunlap J.C."/>
            <person name="Radford A."/>
            <person name="Aramayo R."/>
            <person name="Natvig D.O."/>
            <person name="Alex L.A."/>
            <person name="Mannhaupt G."/>
            <person name="Ebbole D.J."/>
            <person name="Freitag M."/>
            <person name="Paulsen I."/>
            <person name="Sachs M.S."/>
            <person name="Lander E.S."/>
            <person name="Nusbaum C."/>
            <person name="Birren B.W."/>
        </authorList>
    </citation>
    <scope>NUCLEOTIDE SEQUENCE [LARGE SCALE GENOMIC DNA]</scope>
    <source>
        <strain>ATCC 24698 / 74-OR23-1A / CBS 708.71 / DSM 1257 / FGSC 987</strain>
    </source>
</reference>
<keyword id="KW-1003">Cell membrane</keyword>
<keyword id="KW-0472">Membrane</keyword>
<keyword id="KW-1185">Reference proteome</keyword>
<keyword id="KW-0812">Transmembrane</keyword>
<keyword id="KW-1133">Transmembrane helix</keyword>
<dbReference type="EMBL" id="BX842630">
    <property type="protein sequence ID" value="CAE76357.1"/>
    <property type="status" value="ALT_SEQ"/>
    <property type="molecule type" value="Genomic_DNA"/>
</dbReference>
<dbReference type="EMBL" id="CM002236">
    <property type="protein sequence ID" value="EAA35625.2"/>
    <property type="molecule type" value="Genomic_DNA"/>
</dbReference>
<dbReference type="RefSeq" id="XP_964861.2">
    <property type="nucleotide sequence ID" value="XM_959768.2"/>
</dbReference>
<dbReference type="STRING" id="367110.Q7SFN5"/>
<dbReference type="PaxDb" id="5141-EFNCRP00000001213"/>
<dbReference type="EnsemblFungi" id="EAA35625">
    <property type="protein sequence ID" value="EAA35625"/>
    <property type="gene ID" value="NCU01996"/>
</dbReference>
<dbReference type="GeneID" id="3881001"/>
<dbReference type="KEGG" id="ncr:NCU01996"/>
<dbReference type="VEuPathDB" id="FungiDB:NCU01996"/>
<dbReference type="HOGENOM" id="CLU_016694_1_0_1"/>
<dbReference type="InParanoid" id="Q7SFN5"/>
<dbReference type="OrthoDB" id="2354757at2759"/>
<dbReference type="Proteomes" id="UP000001805">
    <property type="component" value="Chromosome 1, Linkage Group I"/>
</dbReference>
<dbReference type="GO" id="GO:0032153">
    <property type="term" value="C:cell division site"/>
    <property type="evidence" value="ECO:0000318"/>
    <property type="project" value="GO_Central"/>
</dbReference>
<dbReference type="GO" id="GO:0035838">
    <property type="term" value="C:growing cell tip"/>
    <property type="evidence" value="ECO:0000318"/>
    <property type="project" value="GO_Central"/>
</dbReference>
<dbReference type="GO" id="GO:0005886">
    <property type="term" value="C:plasma membrane"/>
    <property type="evidence" value="ECO:0000318"/>
    <property type="project" value="GO_Central"/>
</dbReference>
<dbReference type="InterPro" id="IPR051380">
    <property type="entry name" value="pH-response_reg_palI/RIM9"/>
</dbReference>
<dbReference type="InterPro" id="IPR009571">
    <property type="entry name" value="SUR7/Rim9-like_fungi"/>
</dbReference>
<dbReference type="PANTHER" id="PTHR28013">
    <property type="entry name" value="PROTEIN DCV1-RELATED"/>
    <property type="match status" value="1"/>
</dbReference>
<dbReference type="PANTHER" id="PTHR28013:SF3">
    <property type="entry name" value="PROTEIN DCV1-RELATED"/>
    <property type="match status" value="1"/>
</dbReference>
<dbReference type="Pfam" id="PF06687">
    <property type="entry name" value="SUR7"/>
    <property type="match status" value="1"/>
</dbReference>
<comment type="function">
    <text evidence="1">Required for the proteolytic cleavage of the transcription factor pacc-1 in response to alkaline ambient pH.</text>
</comment>
<comment type="subcellular location">
    <subcellularLocation>
        <location evidence="1">Cell membrane</location>
        <topology evidence="1">Multi-pass membrane protein</topology>
    </subcellularLocation>
</comment>
<comment type="similarity">
    <text evidence="4">Belongs to the palI/RIM9 family.</text>
</comment>
<comment type="sequence caution" evidence="4">
    <conflict type="erroneous gene model prediction">
        <sequence resource="EMBL-CDS" id="CAE76357"/>
    </conflict>
</comment>
<protein>
    <recommendedName>
        <fullName>pH-response regulator protein palI/prr-5</fullName>
    </recommendedName>
    <alternativeName>
        <fullName>pH-response regulator 5</fullName>
    </alternativeName>
</protein>
<organism>
    <name type="scientific">Neurospora crassa (strain ATCC 24698 / 74-OR23-1A / CBS 708.71 / DSM 1257 / FGSC 987)</name>
    <dbReference type="NCBI Taxonomy" id="367110"/>
    <lineage>
        <taxon>Eukaryota</taxon>
        <taxon>Fungi</taxon>
        <taxon>Dikarya</taxon>
        <taxon>Ascomycota</taxon>
        <taxon>Pezizomycotina</taxon>
        <taxon>Sordariomycetes</taxon>
        <taxon>Sordariomycetidae</taxon>
        <taxon>Sordariales</taxon>
        <taxon>Sordariaceae</taxon>
        <taxon>Neurospora</taxon>
    </lineage>
</organism>
<gene>
    <name type="primary">prr-5</name>
    <name type="synonym">rim9</name>
    <name type="ORF">B13D15.020</name>
    <name type="ORF">NCU01996</name>
</gene>
<proteinExistence type="inferred from homology"/>
<sequence>MLRPATPLAVLLFAAFGLLTLATISTPIIKQIPLSSFEIKDVGDLSFGVFGYCTSSGCSPIEIGYDTSAFSDKINSDFDIPRATRSTLSSILIVHPVAALITLINFVLAIVAHFHSPSHSARYLLILFIVSFVDFIVCLLCFLVDVLLFIPHLSWGSYIVVAATILVAFCGLVTCAMRRTLVNRKANRKRIAENAEMSGENYYNRQAQTAPVTQVTGPQPTVPMISGANGGGDKLPEFTTFEKKDDRSEERIPLTSVSPIERSPATLVNDSTPPNFMDGAPSRSPSTTPVGRDQYGNPLPPQDGYAMRVGPQNERLNSRGRGGMPPGGYRGRGGFPGPGRGGGPPQNGRGGYGPPGRGRGGYGPPPRGYGGPGPRGGRGPPPQGYQGGPDRRPSPGAPYGPGPGVGTYGPSQPSPYANRQQSPGPQFAAPGYGNPEQPGPQYSAYNPRRVSLPRAESPPPLPGIDDGMPGPAVELDASPANRGVGQYGIRDSDSDVAGMLAMQQARVPDPDRGNDANGHSQEGPNDVYVPPRQAWNQGFVGSTPGLAPPTARGPTRPISEAVTATVASDYYEDVDPRFAEPSAAADKRPPPISMQSPPASNSYDDIPNRARSPAESENSNFTSISQRGINPRWNSANAPMPPPVAGVYAGGGGGGNVVPRRPVNRPGAGPADGSDLFLNSNPDFQLPGRGGNMPRAAGPR</sequence>